<reference evidence="5" key="1">
    <citation type="journal article" date="2012" name="Syst. Biol.">
        <title>Peptidomics-based phylogeny and biogeography of Mantophasmatodea (Hexapoda).</title>
        <authorList>
            <person name="Predel R."/>
            <person name="Neupert S."/>
            <person name="Huetteroth W."/>
            <person name="Kahnt J."/>
            <person name="Waidelich D."/>
            <person name="Roth S."/>
        </authorList>
    </citation>
    <scope>PROTEIN SEQUENCE</scope>
    <scope>AMIDATION AT ARG-8</scope>
    <source>
        <tissue evidence="3">Thoracic perisympathetic organs</tissue>
    </source>
</reference>
<evidence type="ECO:0000250" key="1">
    <source>
        <dbReference type="UniProtKB" id="P34405"/>
    </source>
</evidence>
<evidence type="ECO:0000255" key="2"/>
<evidence type="ECO:0000269" key="3">
    <source>
    </source>
</evidence>
<evidence type="ECO:0000303" key="4">
    <source>
    </source>
</evidence>
<evidence type="ECO:0000305" key="5"/>
<evidence type="ECO:0000305" key="6">
    <source>
    </source>
</evidence>
<keyword id="KW-0027">Amidation</keyword>
<keyword id="KW-0903">Direct protein sequencing</keyword>
<keyword id="KW-0527">Neuropeptide</keyword>
<keyword id="KW-0964">Secreted</keyword>
<dbReference type="GO" id="GO:0005576">
    <property type="term" value="C:extracellular region"/>
    <property type="evidence" value="ECO:0007669"/>
    <property type="project" value="UniProtKB-SubCell"/>
</dbReference>
<dbReference type="GO" id="GO:0007218">
    <property type="term" value="P:neuropeptide signaling pathway"/>
    <property type="evidence" value="ECO:0007669"/>
    <property type="project" value="UniProtKB-KW"/>
</dbReference>
<sequence length="8" mass="965">SDYLQLAR</sequence>
<proteinExistence type="evidence at protein level"/>
<name>FAR2_NAMOO</name>
<accession>P86999</accession>
<comment type="function">
    <text evidence="1">FMRFamides and FMRFamide-like peptides are neuropeptides.</text>
</comment>
<comment type="subcellular location">
    <subcellularLocation>
        <location evidence="6">Secreted</location>
    </subcellularLocation>
</comment>
<comment type="similarity">
    <text evidence="2">Belongs to the FARP (FMRF amide related peptide) family.</text>
</comment>
<organism>
    <name type="scientific">Namaquaphasma ookiepense</name>
    <name type="common">Gladiator bug</name>
    <dbReference type="NCBI Taxonomy" id="409167"/>
    <lineage>
        <taxon>Eukaryota</taxon>
        <taxon>Metazoa</taxon>
        <taxon>Ecdysozoa</taxon>
        <taxon>Arthropoda</taxon>
        <taxon>Hexapoda</taxon>
        <taxon>Insecta</taxon>
        <taxon>Pterygota</taxon>
        <taxon>Neoptera</taxon>
        <taxon>Polyneoptera</taxon>
        <taxon>Mantophasmatodea</taxon>
        <taxon>Austrophasmatidae</taxon>
        <taxon>Namaquaphasma</taxon>
    </lineage>
</organism>
<feature type="peptide" id="PRO_0000420497" description="Extended FMRFamide-2">
    <location>
        <begin position="1"/>
        <end position="8"/>
    </location>
</feature>
<feature type="modified residue" description="Arginine amide" evidence="3">
    <location>
        <position position="8"/>
    </location>
</feature>
<feature type="unsure residue" description="L or I" evidence="3">
    <location>
        <position position="6"/>
    </location>
</feature>
<protein>
    <recommendedName>
        <fullName>Extended FMRFamide-2</fullName>
        <shortName evidence="4">FMRFa-2</shortName>
    </recommendedName>
</protein>